<organism>
    <name type="scientific">Homo sapiens</name>
    <name type="common">Human</name>
    <dbReference type="NCBI Taxonomy" id="9606"/>
    <lineage>
        <taxon>Eukaryota</taxon>
        <taxon>Metazoa</taxon>
        <taxon>Chordata</taxon>
        <taxon>Craniata</taxon>
        <taxon>Vertebrata</taxon>
        <taxon>Euteleostomi</taxon>
        <taxon>Mammalia</taxon>
        <taxon>Eutheria</taxon>
        <taxon>Euarchontoglires</taxon>
        <taxon>Primates</taxon>
        <taxon>Haplorrhini</taxon>
        <taxon>Catarrhini</taxon>
        <taxon>Hominidae</taxon>
        <taxon>Homo</taxon>
    </lineage>
</organism>
<keyword id="KW-0002">3D-structure</keyword>
<keyword id="KW-0007">Acetylation</keyword>
<keyword id="KW-0025">Alternative splicing</keyword>
<keyword id="KW-0032">Aminotransferase</keyword>
<keyword id="KW-0903">Direct protein sequencing</keyword>
<keyword id="KW-0225">Disease variant</keyword>
<keyword id="KW-0496">Mitochondrion</keyword>
<keyword id="KW-1267">Proteomics identification</keyword>
<keyword id="KW-0663">Pyridoxal phosphate</keyword>
<keyword id="KW-1185">Reference proteome</keyword>
<keyword id="KW-0808">Transferase</keyword>
<keyword id="KW-0809">Transit peptide</keyword>
<accession>P04181</accession>
<accession>D3DRF0</accession>
<accession>Q16068</accession>
<accession>Q16069</accession>
<accession>Q68CS0</accession>
<accession>Q6IAV9</accession>
<accession>Q9UD03</accession>
<evidence type="ECO:0000250" key="1">
    <source>
        <dbReference type="UniProtKB" id="P29758"/>
    </source>
</evidence>
<evidence type="ECO:0000269" key="2">
    <source>
    </source>
</evidence>
<evidence type="ECO:0000269" key="3">
    <source>
    </source>
</evidence>
<evidence type="ECO:0000269" key="4">
    <source>
    </source>
</evidence>
<evidence type="ECO:0000269" key="5">
    <source>
    </source>
</evidence>
<evidence type="ECO:0000269" key="6">
    <source>
    </source>
</evidence>
<evidence type="ECO:0000269" key="7">
    <source>
    </source>
</evidence>
<evidence type="ECO:0000269" key="8">
    <source>
    </source>
</evidence>
<evidence type="ECO:0000269" key="9">
    <source>
    </source>
</evidence>
<evidence type="ECO:0000269" key="10">
    <source>
    </source>
</evidence>
<evidence type="ECO:0000269" key="11">
    <source>
    </source>
</evidence>
<evidence type="ECO:0000303" key="12">
    <source>
    </source>
</evidence>
<evidence type="ECO:0000303" key="13">
    <source>
    </source>
</evidence>
<evidence type="ECO:0000305" key="14"/>
<evidence type="ECO:0000305" key="15">
    <source>
    </source>
</evidence>
<evidence type="ECO:0000305" key="16">
    <source>
    </source>
</evidence>
<evidence type="ECO:0007829" key="17">
    <source>
        <dbReference type="PDB" id="5VWO"/>
    </source>
</evidence>
<evidence type="ECO:0007829" key="18">
    <source>
        <dbReference type="PDB" id="7TA1"/>
    </source>
</evidence>
<evidence type="ECO:0007829" key="19">
    <source>
        <dbReference type="PDB" id="7TED"/>
    </source>
</evidence>
<evidence type="ECO:0007829" key="20">
    <source>
        <dbReference type="PDB" id="8V9M"/>
    </source>
</evidence>
<proteinExistence type="evidence at protein level"/>
<reference key="1">
    <citation type="journal article" date="1986" name="Proc. Natl. Acad. Sci. U.S.A.">
        <title>Molecular cloning of human ornithine aminotransferase mRNA.</title>
        <authorList>
            <person name="Inana G."/>
            <person name="Totsuka S."/>
            <person name="Redmond M."/>
            <person name="Dougherty T."/>
            <person name="Nagle J."/>
            <person name="Shiono T."/>
            <person name="Ohura T."/>
            <person name="Kominami E."/>
            <person name="Katunuma N."/>
        </authorList>
    </citation>
    <scope>NUCLEOTIDE SEQUENCE [MRNA] (ISOFORM 1)</scope>
</reference>
<reference key="2">
    <citation type="journal article" date="1986" name="DNA">
        <title>Investigation of gyrate atrophy using a cDNA clone for human ornithine aminotransferase.</title>
        <authorList>
            <person name="Ramesh V."/>
            <person name="Shaffer M.M."/>
            <person name="Allaire J.M."/>
            <person name="Shih V.E."/>
            <person name="Gusella J.F."/>
        </authorList>
    </citation>
    <scope>NUCLEOTIDE SEQUENCE [MRNA] (ISOFORM 1)</scope>
    <source>
        <tissue>Liver</tissue>
    </source>
</reference>
<reference key="3">
    <citation type="journal article" date="1989" name="FEBS Lett.">
        <title>Molecular cloning and nucleotide sequence analysis of mRNA for human kidney ornithine aminotransferase. An examination of ornithine aminotransferase isozymes between liver and kidney.</title>
        <authorList>
            <person name="Kobayashi T."/>
            <person name="Nishii M."/>
            <person name="Takagi Y."/>
            <person name="Titani T."/>
            <person name="Matsuzawa T."/>
        </authorList>
    </citation>
    <scope>NUCLEOTIDE SEQUENCE [MRNA] (ISOFORM 1)</scope>
    <scope>PROTEIN SEQUENCE OF 36-40</scope>
    <scope>PROTEOLYTIC PROCESSING</scope>
    <source>
        <tissue>Kidney</tissue>
    </source>
</reference>
<reference key="4">
    <citation type="journal article" date="1988" name="J. Biol. Chem.">
        <title>Human ornithine-delta-aminotransferase. cDNA cloning and analysis of the structural gene.</title>
        <authorList>
            <person name="Mitchell G.A."/>
            <person name="Looney J.E."/>
            <person name="Brody L.C."/>
            <person name="Steel G."/>
            <person name="Suchanek M."/>
            <person name="Engelhardt J.F."/>
            <person name="Willard H.F."/>
            <person name="Valle D."/>
        </authorList>
    </citation>
    <scope>NUCLEOTIDE SEQUENCE [GENOMIC DNA / MRNA] (ISOFORM 1)</scope>
</reference>
<reference key="5">
    <citation type="journal article" date="1990" name="Exp. Eye Res.">
        <title>Analysis of the human ornithine aminotransferase gene family.</title>
        <authorList>
            <person name="Zintz C.B."/>
            <person name="Inana G."/>
        </authorList>
    </citation>
    <scope>NUCLEOTIDE SEQUENCE [GENOMIC DNA]</scope>
    <source>
        <tissue>Placenta</tissue>
    </source>
</reference>
<reference key="6">
    <citation type="journal article" date="2004" name="Nat. Genet.">
        <title>Complete sequencing and characterization of 21,243 full-length human cDNAs.</title>
        <authorList>
            <person name="Ota T."/>
            <person name="Suzuki Y."/>
            <person name="Nishikawa T."/>
            <person name="Otsuki T."/>
            <person name="Sugiyama T."/>
            <person name="Irie R."/>
            <person name="Wakamatsu A."/>
            <person name="Hayashi K."/>
            <person name="Sato H."/>
            <person name="Nagai K."/>
            <person name="Kimura K."/>
            <person name="Makita H."/>
            <person name="Sekine M."/>
            <person name="Obayashi M."/>
            <person name="Nishi T."/>
            <person name="Shibahara T."/>
            <person name="Tanaka T."/>
            <person name="Ishii S."/>
            <person name="Yamamoto J."/>
            <person name="Saito K."/>
            <person name="Kawai Y."/>
            <person name="Isono Y."/>
            <person name="Nakamura Y."/>
            <person name="Nagahari K."/>
            <person name="Murakami K."/>
            <person name="Yasuda T."/>
            <person name="Iwayanagi T."/>
            <person name="Wagatsuma M."/>
            <person name="Shiratori A."/>
            <person name="Sudo H."/>
            <person name="Hosoiri T."/>
            <person name="Kaku Y."/>
            <person name="Kodaira H."/>
            <person name="Kondo H."/>
            <person name="Sugawara M."/>
            <person name="Takahashi M."/>
            <person name="Kanda K."/>
            <person name="Yokoi T."/>
            <person name="Furuya T."/>
            <person name="Kikkawa E."/>
            <person name="Omura Y."/>
            <person name="Abe K."/>
            <person name="Kamihara K."/>
            <person name="Katsuta N."/>
            <person name="Sato K."/>
            <person name="Tanikawa M."/>
            <person name="Yamazaki M."/>
            <person name="Ninomiya K."/>
            <person name="Ishibashi T."/>
            <person name="Yamashita H."/>
            <person name="Murakawa K."/>
            <person name="Fujimori K."/>
            <person name="Tanai H."/>
            <person name="Kimata M."/>
            <person name="Watanabe M."/>
            <person name="Hiraoka S."/>
            <person name="Chiba Y."/>
            <person name="Ishida S."/>
            <person name="Ono Y."/>
            <person name="Takiguchi S."/>
            <person name="Watanabe S."/>
            <person name="Yosida M."/>
            <person name="Hotuta T."/>
            <person name="Kusano J."/>
            <person name="Kanehori K."/>
            <person name="Takahashi-Fujii A."/>
            <person name="Hara H."/>
            <person name="Tanase T.-O."/>
            <person name="Nomura Y."/>
            <person name="Togiya S."/>
            <person name="Komai F."/>
            <person name="Hara R."/>
            <person name="Takeuchi K."/>
            <person name="Arita M."/>
            <person name="Imose N."/>
            <person name="Musashino K."/>
            <person name="Yuuki H."/>
            <person name="Oshima A."/>
            <person name="Sasaki N."/>
            <person name="Aotsuka S."/>
            <person name="Yoshikawa Y."/>
            <person name="Matsunawa H."/>
            <person name="Ichihara T."/>
            <person name="Shiohata N."/>
            <person name="Sano S."/>
            <person name="Moriya S."/>
            <person name="Momiyama H."/>
            <person name="Satoh N."/>
            <person name="Takami S."/>
            <person name="Terashima Y."/>
            <person name="Suzuki O."/>
            <person name="Nakagawa S."/>
            <person name="Senoh A."/>
            <person name="Mizoguchi H."/>
            <person name="Goto Y."/>
            <person name="Shimizu F."/>
            <person name="Wakebe H."/>
            <person name="Hishigaki H."/>
            <person name="Watanabe T."/>
            <person name="Sugiyama A."/>
            <person name="Takemoto M."/>
            <person name="Kawakami B."/>
            <person name="Yamazaki M."/>
            <person name="Watanabe K."/>
            <person name="Kumagai A."/>
            <person name="Itakura S."/>
            <person name="Fukuzumi Y."/>
            <person name="Fujimori Y."/>
            <person name="Komiyama M."/>
            <person name="Tashiro H."/>
            <person name="Tanigami A."/>
            <person name="Fujiwara T."/>
            <person name="Ono T."/>
            <person name="Yamada K."/>
            <person name="Fujii Y."/>
            <person name="Ozaki K."/>
            <person name="Hirao M."/>
            <person name="Ohmori Y."/>
            <person name="Kawabata A."/>
            <person name="Hikiji T."/>
            <person name="Kobatake N."/>
            <person name="Inagaki H."/>
            <person name="Ikema Y."/>
            <person name="Okamoto S."/>
            <person name="Okitani R."/>
            <person name="Kawakami T."/>
            <person name="Noguchi S."/>
            <person name="Itoh T."/>
            <person name="Shigeta K."/>
            <person name="Senba T."/>
            <person name="Matsumura K."/>
            <person name="Nakajima Y."/>
            <person name="Mizuno T."/>
            <person name="Morinaga M."/>
            <person name="Sasaki M."/>
            <person name="Togashi T."/>
            <person name="Oyama M."/>
            <person name="Hata H."/>
            <person name="Watanabe M."/>
            <person name="Komatsu T."/>
            <person name="Mizushima-Sugano J."/>
            <person name="Satoh T."/>
            <person name="Shirai Y."/>
            <person name="Takahashi Y."/>
            <person name="Nakagawa K."/>
            <person name="Okumura K."/>
            <person name="Nagase T."/>
            <person name="Nomura N."/>
            <person name="Kikuchi H."/>
            <person name="Masuho Y."/>
            <person name="Yamashita R."/>
            <person name="Nakai K."/>
            <person name="Yada T."/>
            <person name="Nakamura Y."/>
            <person name="Ohara O."/>
            <person name="Isogai T."/>
            <person name="Sugano S."/>
        </authorList>
    </citation>
    <scope>NUCLEOTIDE SEQUENCE [LARGE SCALE MRNA] (ISOFORMS 1 AND 2)</scope>
    <source>
        <tissue>Brain</tissue>
        <tissue>Brain cortex</tissue>
        <tissue>Subthalamic nucleus</tissue>
    </source>
</reference>
<reference key="7">
    <citation type="submission" date="2004-06" db="EMBL/GenBank/DDBJ databases">
        <title>Cloning of human full open reading frames in Gateway(TM) system entry vector (pDONR201).</title>
        <authorList>
            <person name="Ebert L."/>
            <person name="Schick M."/>
            <person name="Neubert P."/>
            <person name="Schatten R."/>
            <person name="Henze S."/>
            <person name="Korn B."/>
        </authorList>
    </citation>
    <scope>NUCLEOTIDE SEQUENCE [LARGE SCALE MRNA] (ISOFORM 1)</scope>
</reference>
<reference key="8">
    <citation type="journal article" date="2007" name="BMC Genomics">
        <title>The full-ORF clone resource of the German cDNA consortium.</title>
        <authorList>
            <person name="Bechtel S."/>
            <person name="Rosenfelder H."/>
            <person name="Duda A."/>
            <person name="Schmidt C.P."/>
            <person name="Ernst U."/>
            <person name="Wellenreuther R."/>
            <person name="Mehrle A."/>
            <person name="Schuster C."/>
            <person name="Bahr A."/>
            <person name="Bloecker H."/>
            <person name="Heubner D."/>
            <person name="Hoerlein A."/>
            <person name="Michel G."/>
            <person name="Wedler H."/>
            <person name="Koehrer K."/>
            <person name="Ottenwaelder B."/>
            <person name="Poustka A."/>
            <person name="Wiemann S."/>
            <person name="Schupp I."/>
        </authorList>
    </citation>
    <scope>NUCLEOTIDE SEQUENCE [LARGE SCALE MRNA] (ISOFORM 2)</scope>
    <source>
        <tissue>Brain cortex</tissue>
    </source>
</reference>
<reference key="9">
    <citation type="journal article" date="2004" name="Nature">
        <title>The DNA sequence and comparative analysis of human chromosome 10.</title>
        <authorList>
            <person name="Deloukas P."/>
            <person name="Earthrowl M.E."/>
            <person name="Grafham D.V."/>
            <person name="Rubenfield M."/>
            <person name="French L."/>
            <person name="Steward C.A."/>
            <person name="Sims S.K."/>
            <person name="Jones M.C."/>
            <person name="Searle S."/>
            <person name="Scott C."/>
            <person name="Howe K."/>
            <person name="Hunt S.E."/>
            <person name="Andrews T.D."/>
            <person name="Gilbert J.G.R."/>
            <person name="Swarbreck D."/>
            <person name="Ashurst J.L."/>
            <person name="Taylor A."/>
            <person name="Battles J."/>
            <person name="Bird C.P."/>
            <person name="Ainscough R."/>
            <person name="Almeida J.P."/>
            <person name="Ashwell R.I.S."/>
            <person name="Ambrose K.D."/>
            <person name="Babbage A.K."/>
            <person name="Bagguley C.L."/>
            <person name="Bailey J."/>
            <person name="Banerjee R."/>
            <person name="Bates K."/>
            <person name="Beasley H."/>
            <person name="Bray-Allen S."/>
            <person name="Brown A.J."/>
            <person name="Brown J.Y."/>
            <person name="Burford D.C."/>
            <person name="Burrill W."/>
            <person name="Burton J."/>
            <person name="Cahill P."/>
            <person name="Camire D."/>
            <person name="Carter N.P."/>
            <person name="Chapman J.C."/>
            <person name="Clark S.Y."/>
            <person name="Clarke G."/>
            <person name="Clee C.M."/>
            <person name="Clegg S."/>
            <person name="Corby N."/>
            <person name="Coulson A."/>
            <person name="Dhami P."/>
            <person name="Dutta I."/>
            <person name="Dunn M."/>
            <person name="Faulkner L."/>
            <person name="Frankish A."/>
            <person name="Frankland J.A."/>
            <person name="Garner P."/>
            <person name="Garnett J."/>
            <person name="Gribble S."/>
            <person name="Griffiths C."/>
            <person name="Grocock R."/>
            <person name="Gustafson E."/>
            <person name="Hammond S."/>
            <person name="Harley J.L."/>
            <person name="Hart E."/>
            <person name="Heath P.D."/>
            <person name="Ho T.P."/>
            <person name="Hopkins B."/>
            <person name="Horne J."/>
            <person name="Howden P.J."/>
            <person name="Huckle E."/>
            <person name="Hynds C."/>
            <person name="Johnson C."/>
            <person name="Johnson D."/>
            <person name="Kana A."/>
            <person name="Kay M."/>
            <person name="Kimberley A.M."/>
            <person name="Kershaw J.K."/>
            <person name="Kokkinaki M."/>
            <person name="Laird G.K."/>
            <person name="Lawlor S."/>
            <person name="Lee H.M."/>
            <person name="Leongamornlert D.A."/>
            <person name="Laird G."/>
            <person name="Lloyd C."/>
            <person name="Lloyd D.M."/>
            <person name="Loveland J."/>
            <person name="Lovell J."/>
            <person name="McLaren S."/>
            <person name="McLay K.E."/>
            <person name="McMurray A."/>
            <person name="Mashreghi-Mohammadi M."/>
            <person name="Matthews L."/>
            <person name="Milne S."/>
            <person name="Nickerson T."/>
            <person name="Nguyen M."/>
            <person name="Overton-Larty E."/>
            <person name="Palmer S.A."/>
            <person name="Pearce A.V."/>
            <person name="Peck A.I."/>
            <person name="Pelan S."/>
            <person name="Phillimore B."/>
            <person name="Porter K."/>
            <person name="Rice C.M."/>
            <person name="Rogosin A."/>
            <person name="Ross M.T."/>
            <person name="Sarafidou T."/>
            <person name="Sehra H.K."/>
            <person name="Shownkeen R."/>
            <person name="Skuce C.D."/>
            <person name="Smith M."/>
            <person name="Standring L."/>
            <person name="Sycamore N."/>
            <person name="Tester J."/>
            <person name="Thorpe A."/>
            <person name="Torcasso W."/>
            <person name="Tracey A."/>
            <person name="Tromans A."/>
            <person name="Tsolas J."/>
            <person name="Wall M."/>
            <person name="Walsh J."/>
            <person name="Wang H."/>
            <person name="Weinstock K."/>
            <person name="West A.P."/>
            <person name="Willey D.L."/>
            <person name="Whitehead S.L."/>
            <person name="Wilming L."/>
            <person name="Wray P.W."/>
            <person name="Young L."/>
            <person name="Chen Y."/>
            <person name="Lovering R.C."/>
            <person name="Moschonas N.K."/>
            <person name="Siebert R."/>
            <person name="Fechtel K."/>
            <person name="Bentley D."/>
            <person name="Durbin R.M."/>
            <person name="Hubbard T."/>
            <person name="Doucette-Stamm L."/>
            <person name="Beck S."/>
            <person name="Smith D.R."/>
            <person name="Rogers J."/>
        </authorList>
    </citation>
    <scope>NUCLEOTIDE SEQUENCE [LARGE SCALE GENOMIC DNA]</scope>
</reference>
<reference key="10">
    <citation type="submission" date="2005-09" db="EMBL/GenBank/DDBJ databases">
        <authorList>
            <person name="Mural R.J."/>
            <person name="Istrail S."/>
            <person name="Sutton G.G."/>
            <person name="Florea L."/>
            <person name="Halpern A.L."/>
            <person name="Mobarry C.M."/>
            <person name="Lippert R."/>
            <person name="Walenz B."/>
            <person name="Shatkay H."/>
            <person name="Dew I."/>
            <person name="Miller J.R."/>
            <person name="Flanigan M.J."/>
            <person name="Edwards N.J."/>
            <person name="Bolanos R."/>
            <person name="Fasulo D."/>
            <person name="Halldorsson B.V."/>
            <person name="Hannenhalli S."/>
            <person name="Turner R."/>
            <person name="Yooseph S."/>
            <person name="Lu F."/>
            <person name="Nusskern D.R."/>
            <person name="Shue B.C."/>
            <person name="Zheng X.H."/>
            <person name="Zhong F."/>
            <person name="Delcher A.L."/>
            <person name="Huson D.H."/>
            <person name="Kravitz S.A."/>
            <person name="Mouchard L."/>
            <person name="Reinert K."/>
            <person name="Remington K.A."/>
            <person name="Clark A.G."/>
            <person name="Waterman M.S."/>
            <person name="Eichler E.E."/>
            <person name="Adams M.D."/>
            <person name="Hunkapiller M.W."/>
            <person name="Myers E.W."/>
            <person name="Venter J.C."/>
        </authorList>
    </citation>
    <scope>NUCLEOTIDE SEQUENCE [LARGE SCALE GENOMIC DNA]</scope>
</reference>
<reference key="11">
    <citation type="journal article" date="2004" name="Genome Res.">
        <title>The status, quality, and expansion of the NIH full-length cDNA project: the Mammalian Gene Collection (MGC).</title>
        <authorList>
            <consortium name="The MGC Project Team"/>
        </authorList>
    </citation>
    <scope>NUCLEOTIDE SEQUENCE [LARGE SCALE MRNA] (ISOFORM 1)</scope>
    <source>
        <tissue>Placenta</tissue>
        <tissue>Uterus</tissue>
    </source>
</reference>
<reference key="12">
    <citation type="journal article" date="1991" name="Mol. Biol. Med.">
        <title>Molecular pathology of gyrate atrophy of the choroid and retina due to ornithine aminotransferase deficiency.</title>
        <authorList>
            <person name="Ramesh V."/>
            <person name="Gusella J.F."/>
            <person name="Shih V.E."/>
        </authorList>
    </citation>
    <scope>NUCLEOTIDE SEQUENCE [MRNA] OF 50-58 AND 328-336 (ISOFORM 1)</scope>
</reference>
<reference key="13">
    <citation type="journal article" date="1986" name="FEBS Lett.">
        <title>The primary structure of ornithine aminotransferase. Identification of active-site sequence and site of post-translational proteolysis.</title>
        <authorList>
            <person name="Simmaco M."/>
            <person name="John R.A."/>
            <person name="Barra D."/>
            <person name="Bossa F."/>
        </authorList>
    </citation>
    <scope>PARTIAL PROTEIN SEQUENCE</scope>
    <scope>PYRIDOXAL PHOSPHATE AT LYS-292</scope>
    <scope>PROTEOLYTIC PROCESSING</scope>
</reference>
<reference key="14">
    <citation type="journal article" date="2011" name="BMC Syst. Biol.">
        <title>Initial characterization of the human central proteome.</title>
        <authorList>
            <person name="Burkard T.R."/>
            <person name="Planyavsky M."/>
            <person name="Kaupe I."/>
            <person name="Breitwieser F.P."/>
            <person name="Buerckstuemmer T."/>
            <person name="Bennett K.L."/>
            <person name="Superti-Furga G."/>
            <person name="Colinge J."/>
        </authorList>
    </citation>
    <scope>IDENTIFICATION BY MASS SPECTROMETRY [LARGE SCALE ANALYSIS]</scope>
</reference>
<reference key="15">
    <citation type="journal article" date="2014" name="J. Proteomics">
        <title>An enzyme assisted RP-RPLC approach for in-depth analysis of human liver phosphoproteome.</title>
        <authorList>
            <person name="Bian Y."/>
            <person name="Song C."/>
            <person name="Cheng K."/>
            <person name="Dong M."/>
            <person name="Wang F."/>
            <person name="Huang J."/>
            <person name="Sun D."/>
            <person name="Wang L."/>
            <person name="Ye M."/>
            <person name="Zou H."/>
        </authorList>
    </citation>
    <scope>IDENTIFICATION BY MASS SPECTROMETRY [LARGE SCALE ANALYSIS]</scope>
    <source>
        <tissue>Liver</tissue>
    </source>
</reference>
<reference key="16">
    <citation type="journal article" date="2015" name="Proteomics">
        <title>N-terminome analysis of the human mitochondrial proteome.</title>
        <authorList>
            <person name="Vaca Jacome A.S."/>
            <person name="Rabilloud T."/>
            <person name="Schaeffer-Reiss C."/>
            <person name="Rompais M."/>
            <person name="Ayoub D."/>
            <person name="Lane L."/>
            <person name="Bairoch A."/>
            <person name="Van Dorsselaer A."/>
            <person name="Carapito C."/>
        </authorList>
    </citation>
    <scope>IDENTIFICATION BY MASS SPECTROMETRY [LARGE SCALE ANALYSIS]</scope>
</reference>
<reference key="17">
    <citation type="journal article" date="1997" name="Structure">
        <title>Human ornithine aminotransferase complexed with L-canaline and gabaculine: structural basis for substrate recognition.</title>
        <authorList>
            <person name="Shah S.A."/>
            <person name="Shen B.W."/>
            <person name="Brunger A.T."/>
        </authorList>
    </citation>
    <scope>X-RAY CRYSTALLOGRAPHY (2.3 ANGSTROMS)</scope>
</reference>
<reference key="18">
    <citation type="journal article" date="1998" name="J. Mol. Biol.">
        <title>Crystal structure of human recombinant ornithine aminotransferase.</title>
        <authorList>
            <person name="Shen B.W."/>
            <person name="Hennig M."/>
            <person name="Hohenester E."/>
            <person name="Jansonius J.N."/>
            <person name="Schirmer T."/>
        </authorList>
    </citation>
    <scope>X-RAY CRYSTALLOGRAPHY (2.5 ANGSTROMS)</scope>
    <scope>COFACTOR</scope>
</reference>
<reference key="19">
    <citation type="journal article" date="1999" name="J. Mol. Biol.">
        <title>Crystal structure of human ornithine aminotransferase complexed with the highly specific and potent inhibitor 5-fluoromethylornithine.</title>
        <authorList>
            <person name="Storici P."/>
            <person name="Capitani G."/>
            <person name="Mueller R."/>
            <person name="Schirmer T."/>
            <person name="Jansonius J.N."/>
        </authorList>
    </citation>
    <scope>X-RAY CRYSTALLOGRAPHY (1.95 ANGSTROMS)</scope>
</reference>
<reference key="20">
    <citation type="journal article" date="1988" name="Proc. Natl. Acad. Sci. U.S.A.">
        <title>Molecular basis of ornithine aminotransferase deficiency in B-6-responsive and -nonresponsive forms of gyrate atrophy.</title>
        <authorList>
            <person name="Ramesh V."/>
            <person name="McClatchey A.I."/>
            <person name="Ramesh N."/>
            <person name="Benoit L.A."/>
            <person name="Berson E.L."/>
            <person name="Shih V.E."/>
            <person name="Gusella J.F."/>
        </authorList>
    </citation>
    <scope>VARIANTS HOGA LYS-54 AND MET-332</scope>
</reference>
<reference key="21">
    <citation type="journal article" date="1989" name="J. Biol. Chem.">
        <title>Point mutation affecting processing of the ornithine aminotransferase precursor protein in gyrate atrophy.</title>
        <authorList>
            <person name="Inana G."/>
            <person name="Chambers C."/>
            <person name="Hotta Y."/>
            <person name="Inouye L."/>
            <person name="Filpula D."/>
            <person name="Pulford S."/>
            <person name="Shiono T."/>
        </authorList>
    </citation>
    <scope>VARIANT HOGA TYR-319</scope>
</reference>
<reference key="22">
    <citation type="journal article" date="1992" name="Genomics">
        <title>Strand-separating conformational polymorphism analysis: efficacy of detection of point mutations in the human ornithine delta-aminotransferase gene.</title>
        <authorList>
            <person name="Michaud J."/>
            <person name="Brody L.C."/>
            <person name="Steel G."/>
            <person name="Fontaine G."/>
            <person name="Martin L.S."/>
            <person name="Valle D."/>
            <person name="Mitchell G."/>
        </authorList>
    </citation>
    <scope>VARIANTS HOGA THR-180; LEU-241; PRO-250; ASP-353 AND ARG-394</scope>
</reference>
<reference key="23">
    <citation type="journal article" date="1992" name="J. Biol. Chem.">
        <title>Ornithine delta-aminotransferase mutations in gyrate atrophy. Allelic heterogeneity and functional consequences.</title>
        <authorList>
            <person name="Brody L.C."/>
            <person name="Mitchell G.A."/>
            <person name="Obie C."/>
            <person name="Michaud J."/>
            <person name="Steel G."/>
            <person name="Fontaine G."/>
            <person name="Robert M.-F."/>
            <person name="Sipila I."/>
            <person name="Kaiser-Kupfer M."/>
            <person name="Valle D."/>
        </authorList>
    </citation>
    <scope>VARIANTS HOGA HIS-55; LYS-89; PHE-93; LEU-154; THR-180; ALA-184 DEL; LEU-241; CYS-245; PRO-250; ILE-267; LYS-271; ASP-353; ALA-375; ARG-394; PRO-402 AND LEU-417</scope>
    <scope>VARIANT PHE-437</scope>
    <scope>CHARACTERIZATION OF VARIANTS HOGA HIS-55; LYS-89; PHE-93; LEU-154; THR-180; ALA-184 DEL; LEU-241; CYS-245; PRO-250; ILE-267; LYS-271; ASP-353; ALA-375; ARG-394; PRO-402 AND LEU-417</scope>
    <scope>CHARACTERIZATION OF VARIANT PRO-270</scope>
    <scope>FUNCTION</scope>
    <scope>CATALYTIC ACTIVITY</scope>
    <scope>PATHWAY</scope>
</reference>
<reference key="24">
    <citation type="journal article" date="1995" name="Am. J. Hum. Genet.">
        <title>Pyridoxine-responsive gyrate atrophy of the choroid and retina: clinical and biochemical correlates of the mutation A226V.</title>
        <authorList>
            <person name="Michaud J."/>
            <person name="Thompson G.N."/>
            <person name="Brody L.C."/>
            <person name="Steel G."/>
            <person name="Obie C."/>
            <person name="Fontaine G."/>
            <person name="Schappert K."/>
            <person name="Keith C.G."/>
            <person name="Valle D."/>
            <person name="Mitchell G.A."/>
        </authorList>
    </citation>
    <scope>VARIANT HOGA VAL-226</scope>
</reference>
<reference key="25">
    <citation type="journal article" date="1995" name="Am. J. Hum. Genet.">
        <title>A single amino acid substitution within the mature sequence of ornithine aminotransferase obstructs mitochondrial entry of the precursor.</title>
        <authorList>
            <person name="Kobayashi T."/>
            <person name="Ogawa H."/>
            <person name="Kasahara M."/>
            <person name="Shiozawa Z."/>
            <person name="Matsuzawa T."/>
        </authorList>
    </citation>
    <scope>VARIANT HOGA GLU-90</scope>
</reference>
<reference key="26">
    <citation type="journal article" date="2013" name="Hum. Mutat.">
        <title>Functional analysis of missense mutations of OAT, causing gyrate atrophy of choroid and retina.</title>
        <authorList>
            <person name="Doimo M."/>
            <person name="Desbats M.A."/>
            <person name="Baldoin M.C."/>
            <person name="Lenzini E."/>
            <person name="Basso G."/>
            <person name="Murphy E."/>
            <person name="Graziano C."/>
            <person name="Seri M."/>
            <person name="Burlina A."/>
            <person name="Sartori G."/>
            <person name="Trevisson E."/>
            <person name="Salviati L."/>
        </authorList>
    </citation>
    <scope>VARIANTS HOGA ASP-51; ARG-104; GLN-199; LYS-318; MET-332; TYR-394; LEU-417; ASN-436 AND PHE-437</scope>
    <scope>CHARACTERIZATION OF ASP-51; ARG-104; GLN-199; VAL-226; LYS-318; MET-332; TYR-394; LEU-402; LEU-417; ASN-436 AND PHE-437</scope>
    <scope>FUNCTION</scope>
    <scope>CATALYTIC ACTIVITY</scope>
    <scope>PATHWAY</scope>
    <scope>SUBUNIT</scope>
    <scope>SUBCELLULAR LOCATION</scope>
</reference>
<dbReference type="EC" id="2.6.1.13" evidence="3 4"/>
<dbReference type="EMBL" id="M12267">
    <property type="protein sequence ID" value="AAA59956.1"/>
    <property type="molecule type" value="mRNA"/>
</dbReference>
<dbReference type="EMBL" id="M14963">
    <property type="protein sequence ID" value="AAA59959.1"/>
    <property type="molecule type" value="mRNA"/>
</dbReference>
<dbReference type="EMBL" id="Y07511">
    <property type="protein sequence ID" value="CAA68809.1"/>
    <property type="molecule type" value="mRNA"/>
</dbReference>
<dbReference type="EMBL" id="M23204">
    <property type="protein sequence ID" value="AAA36386.1"/>
    <property type="molecule type" value="mRNA"/>
</dbReference>
<dbReference type="EMBL" id="M23205">
    <property type="status" value="NOT_ANNOTATED_CDS"/>
    <property type="molecule type" value="Genomic_DNA"/>
</dbReference>
<dbReference type="EMBL" id="M88760">
    <property type="protein sequence ID" value="AAA59958.1"/>
    <property type="status" value="ALT_SEQ"/>
    <property type="molecule type" value="Genomic_DNA"/>
</dbReference>
<dbReference type="EMBL" id="M29927">
    <property type="protein sequence ID" value="AAA59957.1"/>
    <property type="molecule type" value="Genomic_DNA"/>
</dbReference>
<dbReference type="EMBL" id="M29919">
    <property type="protein sequence ID" value="AAA59957.1"/>
    <property type="status" value="JOINED"/>
    <property type="molecule type" value="Genomic_DNA"/>
</dbReference>
<dbReference type="EMBL" id="M29920">
    <property type="protein sequence ID" value="AAA59957.1"/>
    <property type="status" value="JOINED"/>
    <property type="molecule type" value="Genomic_DNA"/>
</dbReference>
<dbReference type="EMBL" id="M29921">
    <property type="protein sequence ID" value="AAA59957.1"/>
    <property type="status" value="JOINED"/>
    <property type="molecule type" value="Genomic_DNA"/>
</dbReference>
<dbReference type="EMBL" id="M29922">
    <property type="protein sequence ID" value="AAA59957.1"/>
    <property type="status" value="JOINED"/>
    <property type="molecule type" value="Genomic_DNA"/>
</dbReference>
<dbReference type="EMBL" id="M29923">
    <property type="protein sequence ID" value="AAA59957.1"/>
    <property type="status" value="JOINED"/>
    <property type="molecule type" value="Genomic_DNA"/>
</dbReference>
<dbReference type="EMBL" id="M29924">
    <property type="protein sequence ID" value="AAA59957.1"/>
    <property type="status" value="JOINED"/>
    <property type="molecule type" value="Genomic_DNA"/>
</dbReference>
<dbReference type="EMBL" id="M29925">
    <property type="protein sequence ID" value="AAA59957.1"/>
    <property type="status" value="JOINED"/>
    <property type="molecule type" value="Genomic_DNA"/>
</dbReference>
<dbReference type="EMBL" id="M29926">
    <property type="protein sequence ID" value="AAA59957.1"/>
    <property type="status" value="JOINED"/>
    <property type="molecule type" value="Genomic_DNA"/>
</dbReference>
<dbReference type="EMBL" id="AK296032">
    <property type="protein sequence ID" value="BAH12241.1"/>
    <property type="molecule type" value="mRNA"/>
</dbReference>
<dbReference type="EMBL" id="AK312561">
    <property type="protein sequence ID" value="BAG35458.1"/>
    <property type="molecule type" value="mRNA"/>
</dbReference>
<dbReference type="EMBL" id="AK315947">
    <property type="protein sequence ID" value="BAH14318.1"/>
    <property type="molecule type" value="mRNA"/>
</dbReference>
<dbReference type="EMBL" id="CR457045">
    <property type="protein sequence ID" value="CAG33326.1"/>
    <property type="molecule type" value="mRNA"/>
</dbReference>
<dbReference type="EMBL" id="CR749808">
    <property type="protein sequence ID" value="CAH18668.1"/>
    <property type="molecule type" value="mRNA"/>
</dbReference>
<dbReference type="EMBL" id="AL445237">
    <property type="status" value="NOT_ANNOTATED_CDS"/>
    <property type="molecule type" value="Genomic_DNA"/>
</dbReference>
<dbReference type="EMBL" id="CH471066">
    <property type="protein sequence ID" value="EAW49271.1"/>
    <property type="molecule type" value="Genomic_DNA"/>
</dbReference>
<dbReference type="EMBL" id="CH471066">
    <property type="protein sequence ID" value="EAW49272.1"/>
    <property type="molecule type" value="Genomic_DNA"/>
</dbReference>
<dbReference type="EMBL" id="BC000964">
    <property type="protein sequence ID" value="AAH00964.1"/>
    <property type="molecule type" value="mRNA"/>
</dbReference>
<dbReference type="EMBL" id="BC016928">
    <property type="protein sequence ID" value="AAH16928.1"/>
    <property type="molecule type" value="mRNA"/>
</dbReference>
<dbReference type="EMBL" id="S66418">
    <property type="protein sequence ID" value="AAB20298.1"/>
    <property type="molecule type" value="mRNA"/>
</dbReference>
<dbReference type="EMBL" id="S66421">
    <property type="protein sequence ID" value="AAB20297.1"/>
    <property type="molecule type" value="mRNA"/>
</dbReference>
<dbReference type="CCDS" id="CCDS53586.1">
    <molecule id="P04181-2"/>
</dbReference>
<dbReference type="CCDS" id="CCDS7639.1">
    <molecule id="P04181-1"/>
</dbReference>
<dbReference type="PIR" id="A30806">
    <property type="entry name" value="XNHUO"/>
</dbReference>
<dbReference type="PIR" id="I55360">
    <property type="entry name" value="I55360"/>
</dbReference>
<dbReference type="RefSeq" id="NP_000265.1">
    <molecule id="P04181-1"/>
    <property type="nucleotide sequence ID" value="NM_000274.4"/>
</dbReference>
<dbReference type="RefSeq" id="NP_001165285.1">
    <molecule id="P04181-2"/>
    <property type="nucleotide sequence ID" value="NM_001171814.2"/>
</dbReference>
<dbReference type="RefSeq" id="NP_001309894.1">
    <molecule id="P04181-1"/>
    <property type="nucleotide sequence ID" value="NM_001322965.2"/>
</dbReference>
<dbReference type="RefSeq" id="NP_001309895.1">
    <molecule id="P04181-1"/>
    <property type="nucleotide sequence ID" value="NM_001322966.2"/>
</dbReference>
<dbReference type="RefSeq" id="NP_001309896.1">
    <molecule id="P04181-1"/>
    <property type="nucleotide sequence ID" value="NM_001322967.2"/>
</dbReference>
<dbReference type="RefSeq" id="NP_001309897.1">
    <molecule id="P04181-1"/>
    <property type="nucleotide sequence ID" value="NM_001322968.2"/>
</dbReference>
<dbReference type="RefSeq" id="NP_001309898.1">
    <molecule id="P04181-1"/>
    <property type="nucleotide sequence ID" value="NM_001322969.2"/>
</dbReference>
<dbReference type="RefSeq" id="NP_001309899.1">
    <molecule id="P04181-1"/>
    <property type="nucleotide sequence ID" value="NM_001322970.2"/>
</dbReference>
<dbReference type="RefSeq" id="NP_001309900.1">
    <property type="nucleotide sequence ID" value="NM_001322971.1"/>
</dbReference>
<dbReference type="PDB" id="1GBN">
    <property type="method" value="X-ray"/>
    <property type="resolution" value="2.30 A"/>
    <property type="chains" value="A/B/C=38-439"/>
</dbReference>
<dbReference type="PDB" id="1OAT">
    <property type="method" value="X-ray"/>
    <property type="resolution" value="2.50 A"/>
    <property type="chains" value="A/B/C=1-439"/>
</dbReference>
<dbReference type="PDB" id="2BYJ">
    <property type="method" value="X-ray"/>
    <property type="resolution" value="3.02 A"/>
    <property type="chains" value="A/B/C=1-439"/>
</dbReference>
<dbReference type="PDB" id="2BYL">
    <property type="method" value="X-ray"/>
    <property type="resolution" value="2.15 A"/>
    <property type="chains" value="A/B/C=1-439"/>
</dbReference>
<dbReference type="PDB" id="2CAN">
    <property type="method" value="X-ray"/>
    <property type="resolution" value="2.30 A"/>
    <property type="chains" value="A/B/C=38-439"/>
</dbReference>
<dbReference type="PDB" id="2OAT">
    <property type="method" value="X-ray"/>
    <property type="resolution" value="1.95 A"/>
    <property type="chains" value="A/B/C=1-439"/>
</dbReference>
<dbReference type="PDB" id="5VWO">
    <property type="method" value="X-ray"/>
    <property type="resolution" value="1.77 A"/>
    <property type="chains" value="A/B/C=36-439"/>
</dbReference>
<dbReference type="PDB" id="6HX7">
    <property type="method" value="X-ray"/>
    <property type="resolution" value="1.80 A"/>
    <property type="chains" value="A/B/C=26-439"/>
</dbReference>
<dbReference type="PDB" id="6OIA">
    <property type="method" value="X-ray"/>
    <property type="resolution" value="1.78 A"/>
    <property type="chains" value="A/B/C=36-439"/>
</dbReference>
<dbReference type="PDB" id="6V8C">
    <property type="method" value="X-ray"/>
    <property type="resolution" value="1.90 A"/>
    <property type="chains" value="A/B/C=36-439"/>
</dbReference>
<dbReference type="PDB" id="6V8D">
    <property type="method" value="X-ray"/>
    <property type="resolution" value="2.25 A"/>
    <property type="chains" value="A/B/C=36-439"/>
</dbReference>
<dbReference type="PDB" id="7JX9">
    <property type="method" value="X-ray"/>
    <property type="resolution" value="1.96 A"/>
    <property type="chains" value="A/B/C=36-439"/>
</dbReference>
<dbReference type="PDB" id="7LK0">
    <property type="method" value="X-ray"/>
    <property type="resolution" value="1.96 A"/>
    <property type="chains" value="A/B/C=36-439"/>
</dbReference>
<dbReference type="PDB" id="7LK1">
    <property type="method" value="X-ray"/>
    <property type="resolution" value="1.79 A"/>
    <property type="chains" value="A/B/C=36-439"/>
</dbReference>
<dbReference type="PDB" id="7LNM">
    <property type="method" value="X-ray"/>
    <property type="resolution" value="2.00 A"/>
    <property type="chains" value="B/C/E/F/I/J=36-439"/>
</dbReference>
<dbReference type="PDB" id="7LOM">
    <property type="method" value="X-ray"/>
    <property type="resolution" value="2.10 A"/>
    <property type="chains" value="A/B/C=36-439"/>
</dbReference>
<dbReference type="PDB" id="7LON">
    <property type="method" value="X-ray"/>
    <property type="resolution" value="1.95 A"/>
    <property type="chains" value="A/B/C=36-439"/>
</dbReference>
<dbReference type="PDB" id="7T9Z">
    <property type="method" value="X-ray"/>
    <property type="resolution" value="2.15 A"/>
    <property type="chains" value="A/B/C=1-439"/>
</dbReference>
<dbReference type="PDB" id="7TA0">
    <property type="method" value="X-ray"/>
    <property type="resolution" value="2.33 A"/>
    <property type="chains" value="A/B/C=1-439"/>
</dbReference>
<dbReference type="PDB" id="7TA1">
    <property type="method" value="X-ray"/>
    <property type="resolution" value="2.20 A"/>
    <property type="chains" value="A/B/C/D/E/F=1-439"/>
</dbReference>
<dbReference type="PDB" id="7TED">
    <property type="method" value="X-ray"/>
    <property type="resolution" value="2.63 A"/>
    <property type="chains" value="A/B/C/D/E/F/G/H/I=36-439"/>
</dbReference>
<dbReference type="PDB" id="7TEV">
    <property type="method" value="X-ray"/>
    <property type="resolution" value="1.91 A"/>
    <property type="chains" value="A/B/C=36-439"/>
</dbReference>
<dbReference type="PDB" id="7TFP">
    <property type="method" value="X-ray"/>
    <property type="resolution" value="2.71 A"/>
    <property type="chains" value="A/B/C=36-439"/>
</dbReference>
<dbReference type="PDB" id="8EZ1">
    <property type="method" value="X-ray"/>
    <property type="resolution" value="1.91 A"/>
    <property type="chains" value="A/B/C=36-439"/>
</dbReference>
<dbReference type="PDB" id="8V9M">
    <property type="method" value="X-ray"/>
    <property type="resolution" value="1.61 A"/>
    <property type="chains" value="A/B/C=36-439"/>
</dbReference>
<dbReference type="PDBsum" id="1GBN"/>
<dbReference type="PDBsum" id="1OAT"/>
<dbReference type="PDBsum" id="2BYJ"/>
<dbReference type="PDBsum" id="2BYL"/>
<dbReference type="PDBsum" id="2CAN"/>
<dbReference type="PDBsum" id="2OAT"/>
<dbReference type="PDBsum" id="5VWO"/>
<dbReference type="PDBsum" id="6HX7"/>
<dbReference type="PDBsum" id="6OIA"/>
<dbReference type="PDBsum" id="6V8C"/>
<dbReference type="PDBsum" id="6V8D"/>
<dbReference type="PDBsum" id="7JX9"/>
<dbReference type="PDBsum" id="7LK0"/>
<dbReference type="PDBsum" id="7LK1"/>
<dbReference type="PDBsum" id="7LNM"/>
<dbReference type="PDBsum" id="7LOM"/>
<dbReference type="PDBsum" id="7LON"/>
<dbReference type="PDBsum" id="7T9Z"/>
<dbReference type="PDBsum" id="7TA0"/>
<dbReference type="PDBsum" id="7TA1"/>
<dbReference type="PDBsum" id="7TED"/>
<dbReference type="PDBsum" id="7TEV"/>
<dbReference type="PDBsum" id="7TFP"/>
<dbReference type="PDBsum" id="8EZ1"/>
<dbReference type="PDBsum" id="8V9M"/>
<dbReference type="SMR" id="P04181"/>
<dbReference type="BioGRID" id="110996">
    <property type="interactions" value="214"/>
</dbReference>
<dbReference type="FunCoup" id="P04181">
    <property type="interactions" value="2045"/>
</dbReference>
<dbReference type="IntAct" id="P04181">
    <property type="interactions" value="71"/>
</dbReference>
<dbReference type="MINT" id="P04181"/>
<dbReference type="STRING" id="9606.ENSP00000357838"/>
<dbReference type="BindingDB" id="P04181"/>
<dbReference type="ChEMBL" id="CHEMBL5954"/>
<dbReference type="DrugBank" id="DB02821">
    <property type="generic name" value="Canaline"/>
</dbReference>
<dbReference type="DrugBank" id="DB02054">
    <property type="generic name" value="Gabaculine"/>
</dbReference>
<dbReference type="DrugBank" id="DB00129">
    <property type="generic name" value="Ornithine"/>
</dbReference>
<dbReference type="DrugBank" id="DB00114">
    <property type="generic name" value="Pyridoxal phosphate"/>
</dbReference>
<dbReference type="CarbonylDB" id="P04181"/>
<dbReference type="GlyGen" id="P04181">
    <property type="glycosylation" value="1 site, 1 O-linked glycan (1 site)"/>
</dbReference>
<dbReference type="iPTMnet" id="P04181"/>
<dbReference type="MetOSite" id="P04181"/>
<dbReference type="PhosphoSitePlus" id="P04181"/>
<dbReference type="SwissPalm" id="P04181"/>
<dbReference type="BioMuta" id="OAT"/>
<dbReference type="DMDM" id="129018"/>
<dbReference type="REPRODUCTION-2DPAGE" id="IPI00022334"/>
<dbReference type="jPOST" id="P04181"/>
<dbReference type="MassIVE" id="P04181"/>
<dbReference type="PaxDb" id="9606-ENSP00000357838"/>
<dbReference type="PeptideAtlas" id="P04181"/>
<dbReference type="ProteomicsDB" id="51672">
    <molecule id="P04181-1"/>
</dbReference>
<dbReference type="ProteomicsDB" id="51673">
    <molecule id="P04181-2"/>
</dbReference>
<dbReference type="Pumba" id="P04181"/>
<dbReference type="Antibodypedia" id="32371">
    <property type="antibodies" value="256 antibodies from 32 providers"/>
</dbReference>
<dbReference type="DNASU" id="4942"/>
<dbReference type="Ensembl" id="ENST00000368845.6">
    <molecule id="P04181-1"/>
    <property type="protein sequence ID" value="ENSP00000357838.5"/>
    <property type="gene ID" value="ENSG00000065154.12"/>
</dbReference>
<dbReference type="Ensembl" id="ENST00000539214.5">
    <molecule id="P04181-2"/>
    <property type="protein sequence ID" value="ENSP00000439042.1"/>
    <property type="gene ID" value="ENSG00000065154.12"/>
</dbReference>
<dbReference type="GeneID" id="4942"/>
<dbReference type="KEGG" id="hsa:4942"/>
<dbReference type="MANE-Select" id="ENST00000368845.6">
    <property type="protein sequence ID" value="ENSP00000357838.5"/>
    <property type="RefSeq nucleotide sequence ID" value="NM_000274.4"/>
    <property type="RefSeq protein sequence ID" value="NP_000265.1"/>
</dbReference>
<dbReference type="UCSC" id="uc001lhp.4">
    <molecule id="P04181-1"/>
    <property type="organism name" value="human"/>
</dbReference>
<dbReference type="AGR" id="HGNC:8091"/>
<dbReference type="CTD" id="4942"/>
<dbReference type="DisGeNET" id="4942"/>
<dbReference type="GeneCards" id="OAT"/>
<dbReference type="HGNC" id="HGNC:8091">
    <property type="gene designation" value="OAT"/>
</dbReference>
<dbReference type="HPA" id="ENSG00000065154">
    <property type="expression patterns" value="Tissue enhanced (intestine)"/>
</dbReference>
<dbReference type="MalaCards" id="OAT"/>
<dbReference type="MIM" id="258870">
    <property type="type" value="phenotype"/>
</dbReference>
<dbReference type="MIM" id="613349">
    <property type="type" value="gene"/>
</dbReference>
<dbReference type="neXtProt" id="NX_P04181"/>
<dbReference type="OpenTargets" id="ENSG00000065154"/>
<dbReference type="Orphanet" id="414">
    <property type="disease" value="Gyrate atrophy of choroid and retina"/>
</dbReference>
<dbReference type="PharmGKB" id="PA31880"/>
<dbReference type="VEuPathDB" id="HostDB:ENSG00000065154"/>
<dbReference type="eggNOG" id="KOG1402">
    <property type="taxonomic scope" value="Eukaryota"/>
</dbReference>
<dbReference type="GeneTree" id="ENSGT00630000089895"/>
<dbReference type="HOGENOM" id="CLU_016922_10_3_1"/>
<dbReference type="InParanoid" id="P04181"/>
<dbReference type="OMA" id="RSAWDLC"/>
<dbReference type="OrthoDB" id="425114at2759"/>
<dbReference type="PAN-GO" id="P04181">
    <property type="GO annotations" value="6 GO annotations based on evolutionary models"/>
</dbReference>
<dbReference type="PhylomeDB" id="P04181"/>
<dbReference type="TreeFam" id="TF105720"/>
<dbReference type="BioCyc" id="MetaCyc:HS00832-MONOMER"/>
<dbReference type="BRENDA" id="2.6.1.13">
    <property type="organism ID" value="2681"/>
</dbReference>
<dbReference type="PathwayCommons" id="P04181"/>
<dbReference type="Reactome" id="R-HSA-8964539">
    <property type="pathway name" value="Glutamate and glutamine metabolism"/>
</dbReference>
<dbReference type="SABIO-RK" id="P04181"/>
<dbReference type="SignaLink" id="P04181"/>
<dbReference type="SIGNOR" id="P04181"/>
<dbReference type="UniPathway" id="UPA00098">
    <property type="reaction ID" value="UER00358"/>
</dbReference>
<dbReference type="BioGRID-ORCS" id="4942">
    <property type="hits" value="11 hits in 1165 CRISPR screens"/>
</dbReference>
<dbReference type="CD-CODE" id="91857CE7">
    <property type="entry name" value="Nucleolus"/>
</dbReference>
<dbReference type="ChiTaRS" id="OAT">
    <property type="organism name" value="human"/>
</dbReference>
<dbReference type="EvolutionaryTrace" id="P04181"/>
<dbReference type="GenomeRNAi" id="4942"/>
<dbReference type="Pharos" id="P04181">
    <property type="development level" value="Tchem"/>
</dbReference>
<dbReference type="PRO" id="PR:P04181"/>
<dbReference type="Proteomes" id="UP000005640">
    <property type="component" value="Chromosome 10"/>
</dbReference>
<dbReference type="RNAct" id="P04181">
    <property type="molecule type" value="protein"/>
</dbReference>
<dbReference type="Bgee" id="ENSG00000065154">
    <property type="expression patterns" value="Expressed in jejunal mucosa and 208 other cell types or tissues"/>
</dbReference>
<dbReference type="ExpressionAtlas" id="P04181">
    <property type="expression patterns" value="baseline and differential"/>
</dbReference>
<dbReference type="GO" id="GO:0005737">
    <property type="term" value="C:cytoplasm"/>
    <property type="evidence" value="ECO:0000318"/>
    <property type="project" value="GO_Central"/>
</dbReference>
<dbReference type="GO" id="GO:0005759">
    <property type="term" value="C:mitochondrial matrix"/>
    <property type="evidence" value="ECO:0000314"/>
    <property type="project" value="UniProtKB"/>
</dbReference>
<dbReference type="GO" id="GO:0005739">
    <property type="term" value="C:mitochondrion"/>
    <property type="evidence" value="ECO:0000314"/>
    <property type="project" value="HPA"/>
</dbReference>
<dbReference type="GO" id="GO:0005654">
    <property type="term" value="C:nucleoplasm"/>
    <property type="evidence" value="ECO:0000314"/>
    <property type="project" value="HPA"/>
</dbReference>
<dbReference type="GO" id="GO:0042802">
    <property type="term" value="F:identical protein binding"/>
    <property type="evidence" value="ECO:0000353"/>
    <property type="project" value="UniProtKB"/>
</dbReference>
<dbReference type="GO" id="GO:0004587">
    <property type="term" value="F:ornithine aminotransferase activity"/>
    <property type="evidence" value="ECO:0000315"/>
    <property type="project" value="UniProtKB"/>
</dbReference>
<dbReference type="GO" id="GO:0030170">
    <property type="term" value="F:pyridoxal phosphate binding"/>
    <property type="evidence" value="ECO:0000318"/>
    <property type="project" value="GO_Central"/>
</dbReference>
<dbReference type="GO" id="GO:0019544">
    <property type="term" value="P:arginine catabolic process to glutamate"/>
    <property type="evidence" value="ECO:0000318"/>
    <property type="project" value="GO_Central"/>
</dbReference>
<dbReference type="GO" id="GO:0010121">
    <property type="term" value="P:arginine catabolic process to proline via ornithine"/>
    <property type="evidence" value="ECO:0000318"/>
    <property type="project" value="GO_Central"/>
</dbReference>
<dbReference type="GO" id="GO:0055129">
    <property type="term" value="P:L-proline biosynthetic process"/>
    <property type="evidence" value="ECO:0007669"/>
    <property type="project" value="UniProtKB-UniPathway"/>
</dbReference>
<dbReference type="GO" id="GO:0007601">
    <property type="term" value="P:visual perception"/>
    <property type="evidence" value="ECO:0000304"/>
    <property type="project" value="ProtInc"/>
</dbReference>
<dbReference type="CDD" id="cd00610">
    <property type="entry name" value="OAT_like"/>
    <property type="match status" value="1"/>
</dbReference>
<dbReference type="FunFam" id="3.40.640.10:FF:000011">
    <property type="entry name" value="Ornithine aminotransferase"/>
    <property type="match status" value="1"/>
</dbReference>
<dbReference type="FunFam" id="3.90.1150.10:FF:000152">
    <property type="entry name" value="Ornithine aminotransferase"/>
    <property type="match status" value="1"/>
</dbReference>
<dbReference type="Gene3D" id="3.90.1150.10">
    <property type="entry name" value="Aspartate Aminotransferase, domain 1"/>
    <property type="match status" value="1"/>
</dbReference>
<dbReference type="Gene3D" id="3.40.640.10">
    <property type="entry name" value="Type I PLP-dependent aspartate aminotransferase-like (Major domain)"/>
    <property type="match status" value="1"/>
</dbReference>
<dbReference type="InterPro" id="IPR005814">
    <property type="entry name" value="Aminotrans_3"/>
</dbReference>
<dbReference type="InterPro" id="IPR049704">
    <property type="entry name" value="Aminotrans_3_PPA_site"/>
</dbReference>
<dbReference type="InterPro" id="IPR050103">
    <property type="entry name" value="Class-III_PLP-dep_AT"/>
</dbReference>
<dbReference type="InterPro" id="IPR010164">
    <property type="entry name" value="Orn_aminotrans"/>
</dbReference>
<dbReference type="InterPro" id="IPR015424">
    <property type="entry name" value="PyrdxlP-dep_Trfase"/>
</dbReference>
<dbReference type="InterPro" id="IPR015421">
    <property type="entry name" value="PyrdxlP-dep_Trfase_major"/>
</dbReference>
<dbReference type="InterPro" id="IPR015422">
    <property type="entry name" value="PyrdxlP-dep_Trfase_small"/>
</dbReference>
<dbReference type="NCBIfam" id="TIGR01885">
    <property type="entry name" value="Orn_aminotrans"/>
    <property type="match status" value="1"/>
</dbReference>
<dbReference type="PANTHER" id="PTHR11986">
    <property type="entry name" value="AMINOTRANSFERASE CLASS III"/>
    <property type="match status" value="1"/>
</dbReference>
<dbReference type="PANTHER" id="PTHR11986:SF18">
    <property type="entry name" value="ORNITHINE AMINOTRANSFERASE, MITOCHONDRIAL"/>
    <property type="match status" value="1"/>
</dbReference>
<dbReference type="Pfam" id="PF00202">
    <property type="entry name" value="Aminotran_3"/>
    <property type="match status" value="1"/>
</dbReference>
<dbReference type="PIRSF" id="PIRSF000521">
    <property type="entry name" value="Transaminase_4ab_Lys_Orn"/>
    <property type="match status" value="1"/>
</dbReference>
<dbReference type="SUPFAM" id="SSF53383">
    <property type="entry name" value="PLP-dependent transferases"/>
    <property type="match status" value="1"/>
</dbReference>
<dbReference type="PROSITE" id="PS00600">
    <property type="entry name" value="AA_TRANSFER_CLASS_3"/>
    <property type="match status" value="1"/>
</dbReference>
<gene>
    <name type="primary">OAT</name>
</gene>
<name>OAT_HUMAN</name>
<comment type="function">
    <text evidence="3 4">Catalyzes the reversible interconversion of L-ornithine and 2-oxoglutarate to L-glutamate semialdehyde and L-glutamate.</text>
</comment>
<comment type="catalytic activity">
    <reaction evidence="3 4">
        <text>L-ornithine + 2-oxoglutarate = L-glutamate 5-semialdehyde + L-glutamate</text>
        <dbReference type="Rhea" id="RHEA:25160"/>
        <dbReference type="ChEBI" id="CHEBI:16810"/>
        <dbReference type="ChEBI" id="CHEBI:29985"/>
        <dbReference type="ChEBI" id="CHEBI:46911"/>
        <dbReference type="ChEBI" id="CHEBI:58066"/>
        <dbReference type="EC" id="2.6.1.13"/>
    </reaction>
    <physiologicalReaction direction="left-to-right" evidence="15">
        <dbReference type="Rhea" id="RHEA:25161"/>
    </physiologicalReaction>
    <physiologicalReaction direction="right-to-left" evidence="15">
        <dbReference type="Rhea" id="RHEA:25162"/>
    </physiologicalReaction>
</comment>
<comment type="cofactor">
    <cofactor evidence="11">
        <name>pyridoxal 5'-phosphate</name>
        <dbReference type="ChEBI" id="CHEBI:597326"/>
    </cofactor>
</comment>
<comment type="pathway">
    <text evidence="15 16">Amino-acid biosynthesis; L-proline biosynthesis; L-glutamate 5-semialdehyde from L-ornithine: step 1/1.</text>
</comment>
<comment type="subunit">
    <text evidence="4">Homohexamer.</text>
</comment>
<comment type="interaction">
    <interactant intactId="EBI-721662">
        <id>P04181</id>
    </interactant>
    <interactant intactId="EBI-77613">
        <id>P05067</id>
        <label>APP</label>
    </interactant>
    <organismsDiffer>false</organismsDiffer>
    <experiments>3</experiments>
</comment>
<comment type="subcellular location">
    <subcellularLocation>
        <location evidence="4">Mitochondrion matrix</location>
    </subcellularLocation>
</comment>
<comment type="alternative products">
    <event type="alternative splicing"/>
    <isoform>
        <id>P04181-1</id>
        <name>1</name>
        <sequence type="displayed"/>
    </isoform>
    <isoform>
        <id>P04181-2</id>
        <name>2</name>
        <sequence type="described" ref="VSP_043085"/>
    </isoform>
</comment>
<comment type="disease" evidence="2 3 4 6 7 9 10">
    <disease id="DI-01775">
        <name>Hyperornithinemia with gyrate atrophy of choroid and retina</name>
        <acronym>HOGA</acronym>
        <description>A disorder clinically characterized by a triad of progressive chorioretinal degeneration, early cataract formation, and type II muscle fiber atrophy. Characteristic chorioretinal atrophy with progressive constriction of the visual fields leads to blindness at the latest during the sixth decade of life. Patients generally have normal intelligence.</description>
        <dbReference type="MIM" id="258870"/>
    </disease>
    <text>The disease is caused by variants affecting the gene represented in this entry.</text>
</comment>
<comment type="similarity">
    <text evidence="14">Belongs to the class-III pyridoxal-phosphate-dependent aminotransferase family.</text>
</comment>
<feature type="transit peptide" description="Mitochondrion; in renal form" evidence="5">
    <location>
        <begin position="1"/>
        <end position="35"/>
    </location>
</feature>
<feature type="transit peptide" description="Mitochondrion; in hepatic form">
    <location>
        <begin position="1"/>
        <end position="25"/>
    </location>
</feature>
<feature type="chain" id="PRO_0000001262" description="Ornithine aminotransferase, hepatic form">
    <location>
        <begin position="26"/>
        <end position="439"/>
    </location>
</feature>
<feature type="chain" id="PRO_0000001263" description="Ornithine aminotransferase, renal form">
    <location>
        <begin position="36"/>
        <end position="439"/>
    </location>
</feature>
<feature type="modified residue" description="N6-acetyllysine" evidence="1">
    <location>
        <position position="49"/>
    </location>
</feature>
<feature type="modified residue" description="N6-acetyllysine" evidence="1">
    <location>
        <position position="66"/>
    </location>
</feature>
<feature type="modified residue" description="N6-succinyllysine" evidence="1">
    <location>
        <position position="102"/>
    </location>
</feature>
<feature type="modified residue" description="N6-acetyllysine; alternate" evidence="1">
    <location>
        <position position="107"/>
    </location>
</feature>
<feature type="modified residue" description="N6-succinyllysine; alternate" evidence="1">
    <location>
        <position position="107"/>
    </location>
</feature>
<feature type="modified residue" description="N6-(pyridoxal phosphate)lysine" evidence="8">
    <location>
        <position position="292"/>
    </location>
</feature>
<feature type="modified residue" description="N6-acetyllysine; alternate" evidence="1">
    <location>
        <position position="362"/>
    </location>
</feature>
<feature type="modified residue" description="N6-succinyllysine; alternate" evidence="1">
    <location>
        <position position="362"/>
    </location>
</feature>
<feature type="modified residue" description="N6-acetyllysine" evidence="1">
    <location>
        <position position="386"/>
    </location>
</feature>
<feature type="modified residue" description="N6-acetyllysine" evidence="1">
    <location>
        <position position="392"/>
    </location>
</feature>
<feature type="modified residue" description="N6-acetyllysine; alternate" evidence="1">
    <location>
        <position position="405"/>
    </location>
</feature>
<feature type="modified residue" description="N6-succinyllysine; alternate" evidence="1">
    <location>
        <position position="405"/>
    </location>
</feature>
<feature type="modified residue" description="N6-acetyllysine" evidence="1">
    <location>
        <position position="421"/>
    </location>
</feature>
<feature type="splice variant" id="VSP_043085" description="In isoform 2." evidence="12 13">
    <location>
        <begin position="1"/>
        <end position="138"/>
    </location>
</feature>
<feature type="sequence variant" id="VAR_071924" description="In HOGA; loss of protein stability; loss of ornithine aminotransferase activity; dbSNP:rs11553554." evidence="4">
    <original>G</original>
    <variation>D</variation>
    <location>
        <position position="51"/>
    </location>
</feature>
<feature type="sequence variant" id="VAR_000565" description="In HOGA; dbSNP:rs121965048." evidence="7">
    <original>N</original>
    <variation>K</variation>
    <location>
        <position position="54"/>
    </location>
</feature>
<feature type="sequence variant" id="VAR_000566" description="In HOGA; decreased protein abundance; dbSNP:rs121965037." evidence="3">
    <original>Y</original>
    <variation>H</variation>
    <location>
        <position position="55"/>
    </location>
</feature>
<feature type="sequence variant" id="VAR_000567" description="In HOGA; no effect on protein abundance; dbSNP:rs386833602." evidence="3">
    <original>N</original>
    <variation>K</variation>
    <location>
        <position position="89"/>
    </location>
</feature>
<feature type="sequence variant" id="VAR_015648" description="In HOGA; mistargeted, accumulates in cytoplasm; dbSNP:rs121965060." evidence="9">
    <original>Q</original>
    <variation>E</variation>
    <location>
        <position position="90"/>
    </location>
</feature>
<feature type="sequence variant" id="VAR_000568" description="In HOGA; no effect on protein abundance; dbSNP:rs121965038." evidence="3">
    <original>C</original>
    <variation>F</variation>
    <location>
        <position position="93"/>
    </location>
</feature>
<feature type="sequence variant" id="VAR_071925" description="In HOGA; loss of protein stability; loss of ornithine aminotransferase activity; dbSNP:rs386833604." evidence="4">
    <original>Q</original>
    <variation>R</variation>
    <location>
        <position position="104"/>
    </location>
</feature>
<feature type="sequence variant" id="VAR_000569" description="In HOGA; no effect on protein abundance; loss of ornithine aminotransferase activity; dbSNP:rs121965039." evidence="3">
    <original>R</original>
    <variation>L</variation>
    <location>
        <position position="154"/>
    </location>
</feature>
<feature type="sequence variant" id="VAR_000570" description="In HOGA; no effect on protein abundance; loss of ornithine aminotransferase activity; dbSNP:rs121965040." evidence="2 3">
    <original>R</original>
    <variation>T</variation>
    <location>
        <position position="180"/>
    </location>
</feature>
<feature type="sequence variant" id="VAR_000571" description="In HOGA; no effect on protein abundance; loss of ornithine aminotransferase activity; dbSNP:rs121965035." evidence="3">
    <location>
        <position position="184"/>
    </location>
</feature>
<feature type="sequence variant" id="VAR_071926" description="In HOGA; loss of protein stability; loss of ornithine aminotransferase activity; dbSNP:rs267606925." evidence="4">
    <original>P</original>
    <variation>Q</variation>
    <location>
        <position position="199"/>
    </location>
</feature>
<feature type="sequence variant" id="VAR_000572" description="In HOGA; loss of protein stability; loss of ornithine aminotransferase activity; dbSNP:rs121965059." evidence="4 10">
    <original>A</original>
    <variation>V</variation>
    <location>
        <position position="226"/>
    </location>
</feature>
<feature type="sequence variant" id="VAR_000573" description="In HOGA; no effect on protein abundance; dbSNP:rs121965051." evidence="2 3">
    <original>P</original>
    <variation>L</variation>
    <location>
        <position position="241"/>
    </location>
</feature>
<feature type="sequence variant" id="VAR_000574" description="In HOGA; no effect on protein abundance; dbSNP:rs121965046." evidence="3">
    <original>Y</original>
    <variation>C</variation>
    <location>
        <position position="245"/>
    </location>
</feature>
<feature type="sequence variant" id="VAR_000575" description="In HOGA; no effect on protein abundance; dbSNP:rs121965052." evidence="2 3">
    <original>R</original>
    <variation>P</variation>
    <location>
        <position position="250"/>
    </location>
</feature>
<feature type="sequence variant" id="VAR_000576" description="In HOGA; decreased protein abundance; dbSNP:rs386833618." evidence="3">
    <original>T</original>
    <variation>I</variation>
    <location>
        <position position="267"/>
    </location>
</feature>
<feature type="sequence variant" id="VAR_000577" description="Decreased protein abundance; dbSNP:rs121965041." evidence="3">
    <original>A</original>
    <variation>P</variation>
    <location>
        <position position="270"/>
    </location>
</feature>
<feature type="sequence variant" id="VAR_000578" description="In HOGA; no effect on protein abundance; loss of ornithine aminotransferase activity; dbSNP:rs121965042." evidence="3">
    <original>R</original>
    <variation>K</variation>
    <location>
        <position position="271"/>
    </location>
</feature>
<feature type="sequence variant" id="VAR_071927" description="In HOGA; loss of protein stability; loss of ornithine aminotransferase activity; dbSNP:rs386833621." evidence="4">
    <original>E</original>
    <variation>K</variation>
    <location>
        <position position="318"/>
    </location>
</feature>
<feature type="sequence variant" id="VAR_000579" description="In HOGA; dbSNP:rs121965049." evidence="6">
    <original>H</original>
    <variation>Y</variation>
    <location>
        <position position="319"/>
    </location>
</feature>
<feature type="sequence variant" id="VAR_000580" description="In HOGA; loss of protein stability; loss of ornithine aminotransferase activity; dbSNP:rs121965047." evidence="4 7">
    <original>V</original>
    <variation>M</variation>
    <location>
        <position position="332"/>
    </location>
</feature>
<feature type="sequence variant" id="VAR_000581" description="In HOGA; decreased protein abundance; dbSNP:rs121965053." evidence="2 3">
    <original>G</original>
    <variation>D</variation>
    <location>
        <position position="353"/>
    </location>
</feature>
<feature type="sequence variant" id="VAR_000582" description="In HOGA; decreased protein abundance; dbSNP:rs121965045." evidence="3">
    <original>G</original>
    <variation>A</variation>
    <location>
        <position position="375"/>
    </location>
</feature>
<feature type="sequence variant" id="VAR_000583" description="In HOGA; no effect on protein abundance; dbSNP:rs121965054." evidence="2 3">
    <original>C</original>
    <variation>R</variation>
    <location>
        <position position="394"/>
    </location>
</feature>
<feature type="sequence variant" id="VAR_071928" description="In HOGA; loss of protein stability; loss of ornithine aminotransferase activity; dbSNP:rs386833597." evidence="4">
    <original>C</original>
    <variation>Y</variation>
    <location>
        <position position="394"/>
    </location>
</feature>
<feature type="sequence variant" id="VAR_000584" description="In HOGA; may affect protein stability; loss of ornithine aminotransferase activity; dbSNP:rs121965043." evidence="3 4">
    <original>L</original>
    <variation>P</variation>
    <location>
        <position position="402"/>
    </location>
</feature>
<feature type="sequence variant" id="VAR_000585" description="In HOGA; loss of protein stability; loss of ornithine aminotransferase activity; dbSNP:rs121965044." evidence="3 4">
    <original>P</original>
    <variation>L</variation>
    <location>
        <position position="417"/>
    </location>
</feature>
<feature type="sequence variant" id="VAR_071929" description="In HOGA; loss of protein stability; loss of ornithine aminotransferase activity; dbSNP:rs386833598." evidence="4">
    <original>I</original>
    <variation>N</variation>
    <location>
        <position position="436"/>
    </location>
</feature>
<feature type="sequence variant" id="VAR_000586" description="In HOGA; likely benign; no effect on protein stability; no effect on ornithine aminotransferase activity; dbSNP:rs1800456." evidence="3 4">
    <original>L</original>
    <variation>F</variation>
    <location>
        <position position="437"/>
    </location>
</feature>
<feature type="helix" evidence="20">
    <location>
        <begin position="40"/>
        <end position="50"/>
    </location>
</feature>
<feature type="strand" evidence="20">
    <location>
        <begin position="62"/>
        <end position="67"/>
    </location>
</feature>
<feature type="strand" evidence="20">
    <location>
        <begin position="69"/>
        <end position="72"/>
    </location>
</feature>
<feature type="strand" evidence="20">
    <location>
        <begin position="77"/>
        <end position="82"/>
    </location>
</feature>
<feature type="helix" evidence="20">
    <location>
        <begin position="83"/>
        <end position="86"/>
    </location>
</feature>
<feature type="turn" evidence="20">
    <location>
        <begin position="87"/>
        <end position="90"/>
    </location>
</feature>
<feature type="helix" evidence="20">
    <location>
        <begin position="95"/>
        <end position="105"/>
    </location>
</feature>
<feature type="strand" evidence="17">
    <location>
        <begin position="115"/>
        <end position="119"/>
    </location>
</feature>
<feature type="helix" evidence="20">
    <location>
        <begin position="120"/>
        <end position="131"/>
    </location>
</feature>
<feature type="strand" evidence="20">
    <location>
        <begin position="134"/>
        <end position="141"/>
    </location>
</feature>
<feature type="helix" evidence="20">
    <location>
        <begin position="142"/>
        <end position="159"/>
    </location>
</feature>
<feature type="strand" evidence="20">
    <location>
        <begin position="169"/>
        <end position="173"/>
    </location>
</feature>
<feature type="helix" evidence="20">
    <location>
        <begin position="182"/>
        <end position="186"/>
    </location>
</feature>
<feature type="helix" evidence="20">
    <location>
        <begin position="191"/>
        <end position="194"/>
    </location>
</feature>
<feature type="strand" evidence="20">
    <location>
        <begin position="204"/>
        <end position="207"/>
    </location>
</feature>
<feature type="helix" evidence="20">
    <location>
        <begin position="212"/>
        <end position="218"/>
    </location>
</feature>
<feature type="strand" evidence="20">
    <location>
        <begin position="224"/>
        <end position="229"/>
    </location>
</feature>
<feature type="strand" evidence="20">
    <location>
        <begin position="231"/>
        <end position="233"/>
    </location>
</feature>
<feature type="turn" evidence="20">
    <location>
        <begin position="234"/>
        <end position="237"/>
    </location>
</feature>
<feature type="helix" evidence="20">
    <location>
        <begin position="245"/>
        <end position="255"/>
    </location>
</feature>
<feature type="strand" evidence="20">
    <location>
        <begin position="259"/>
        <end position="263"/>
    </location>
</feature>
<feature type="turn" evidence="20">
    <location>
        <begin position="265"/>
        <end position="272"/>
    </location>
</feature>
<feature type="strand" evidence="20">
    <location>
        <begin position="273"/>
        <end position="276"/>
    </location>
</feature>
<feature type="helix" evidence="20">
    <location>
        <begin position="277"/>
        <end position="281"/>
    </location>
</feature>
<feature type="strand" evidence="20">
    <location>
        <begin position="286"/>
        <end position="290"/>
    </location>
</feature>
<feature type="helix" evidence="20">
    <location>
        <begin position="292"/>
        <end position="295"/>
    </location>
</feature>
<feature type="strand" evidence="20">
    <location>
        <begin position="302"/>
        <end position="306"/>
    </location>
</feature>
<feature type="helix" evidence="20">
    <location>
        <begin position="308"/>
        <end position="311"/>
    </location>
</feature>
<feature type="turn" evidence="19">
    <location>
        <begin position="322"/>
        <end position="325"/>
    </location>
</feature>
<feature type="helix" evidence="20">
    <location>
        <begin position="327"/>
        <end position="342"/>
    </location>
</feature>
<feature type="helix" evidence="20">
    <location>
        <begin position="345"/>
        <end position="360"/>
    </location>
</feature>
<feature type="turn" evidence="20">
    <location>
        <begin position="365"/>
        <end position="367"/>
    </location>
</feature>
<feature type="strand" evidence="20">
    <location>
        <begin position="368"/>
        <end position="374"/>
    </location>
</feature>
<feature type="strand" evidence="20">
    <location>
        <begin position="377"/>
        <end position="382"/>
    </location>
</feature>
<feature type="helix" evidence="20">
    <location>
        <begin position="390"/>
        <end position="399"/>
    </location>
</feature>
<feature type="strand" evidence="18">
    <location>
        <begin position="405"/>
        <end position="407"/>
    </location>
</feature>
<feature type="turn" evidence="20">
    <location>
        <begin position="408"/>
        <end position="410"/>
    </location>
</feature>
<feature type="strand" evidence="20">
    <location>
        <begin position="411"/>
        <end position="414"/>
    </location>
</feature>
<feature type="helix" evidence="20">
    <location>
        <begin position="422"/>
        <end position="436"/>
    </location>
</feature>
<protein>
    <recommendedName>
        <fullName>Ornithine aminotransferase, mitochondrial</fullName>
        <ecNumber evidence="3 4">2.6.1.13</ecNumber>
    </recommendedName>
    <alternativeName>
        <fullName>Ornithine delta-aminotransferase</fullName>
    </alternativeName>
    <alternativeName>
        <fullName>Ornithine--oxo-acid aminotransferase</fullName>
    </alternativeName>
    <component>
        <recommendedName>
            <fullName>Ornithine aminotransferase, hepatic form</fullName>
        </recommendedName>
    </component>
    <component>
        <recommendedName>
            <fullName>Ornithine aminotransferase, renal form</fullName>
        </recommendedName>
    </component>
</protein>
<sequence>MFSKLAHLQRFAVLSRGVHSSVASATSVATKKTVQGPPTSDDIFEREYKYGAHNYHPLPVALERGKGIYLWDVEGRKYFDFLSSYSAVNQGHCHPKIVNALKSQVDKLTLTSRAFYNNVLGEYEEYITKLFNYHKVLPMNTGVEAGETACKLARKWGYTVKGIQKYKAKIVFAAGNFWGRTLSAISSSTDPTSYDGFGPFMPGFDIIPYNDLPALERALQDPNVAAFMVEPIQGEAGVVVPDPGYLMGVRELCTRHQVLFIADEIQTGLARTGRWLAVDYENVRPDIVLLGKALSGGLYPVSAVLCDDDIMLTIKPGEHGSTYGGNPLGCRVAIAALEVLEEENLAENADKLGIILRNELMKLPSDVVTAVRGKGLLNAIVIKETKDWDAWKVCLRLRDNGLLAKPTHGDIIRFAPPLVIKEDELRESIEIINKTILSF</sequence>